<proteinExistence type="evidence at protein level"/>
<gene>
    <name evidence="1" type="primary">HAAO</name>
</gene>
<evidence type="ECO:0000255" key="1">
    <source>
        <dbReference type="HAMAP-Rule" id="MF_03019"/>
    </source>
</evidence>
<evidence type="ECO:0000269" key="2">
    <source>
    </source>
</evidence>
<evidence type="ECO:0007829" key="3">
    <source>
        <dbReference type="PDB" id="3FE5"/>
    </source>
</evidence>
<name>3HAO_BOVIN</name>
<reference key="1">
    <citation type="submission" date="2006-08" db="EMBL/GenBank/DDBJ databases">
        <authorList>
            <consortium name="NIH - Mammalian Gene Collection (MGC) project"/>
        </authorList>
    </citation>
    <scope>NUCLEOTIDE SEQUENCE [LARGE SCALE MRNA]</scope>
    <source>
        <strain>Hereford</strain>
        <tissue>Fetal liver</tissue>
    </source>
</reference>
<reference key="2">
    <citation type="journal article" date="2009" name="Biopolymers">
        <title>Crystal structure of bovine 3-hydroxyanthranilate 3,4-dioxygenase.</title>
        <authorList>
            <person name="Dilovic I."/>
            <person name="Gliubich F."/>
            <person name="Malpeli G."/>
            <person name="Zanotti G."/>
            <person name="Matkovic-Calogovic D."/>
        </authorList>
    </citation>
    <scope>X-RAY CRYSTALLOGRAPHY (2.51 ANGSTROMS) OF 2-286</scope>
    <scope>SUBUNIT</scope>
    <scope>IRON-BINDING SITES</scope>
</reference>
<feature type="chain" id="PRO_0000283033" description="3-hydroxyanthranilate 3,4-dioxygenase">
    <location>
        <begin position="1"/>
        <end position="286"/>
    </location>
</feature>
<feature type="region of interest" description="Domain A (catalytic)">
    <location>
        <begin position="1"/>
        <end position="160"/>
    </location>
</feature>
<feature type="region of interest" description="Linker">
    <location>
        <begin position="161"/>
        <end position="177"/>
    </location>
</feature>
<feature type="region of interest" description="Domain B">
    <location>
        <begin position="178"/>
        <end position="286"/>
    </location>
</feature>
<feature type="binding site" evidence="1">
    <location>
        <position position="43"/>
    </location>
    <ligand>
        <name>O2</name>
        <dbReference type="ChEBI" id="CHEBI:15379"/>
    </ligand>
</feature>
<feature type="binding site">
    <location>
        <position position="47"/>
    </location>
    <ligand>
        <name>Fe cation</name>
        <dbReference type="ChEBI" id="CHEBI:24875"/>
        <note>catalytic</note>
    </ligand>
</feature>
<feature type="binding site">
    <location>
        <position position="53"/>
    </location>
    <ligand>
        <name>Fe cation</name>
        <dbReference type="ChEBI" id="CHEBI:24875"/>
        <note>catalytic</note>
    </ligand>
</feature>
<feature type="binding site" evidence="1">
    <location>
        <position position="53"/>
    </location>
    <ligand>
        <name>substrate</name>
    </ligand>
</feature>
<feature type="binding site">
    <location>
        <position position="91"/>
    </location>
    <ligand>
        <name>Fe cation</name>
        <dbReference type="ChEBI" id="CHEBI:24875"/>
        <note>catalytic</note>
    </ligand>
</feature>
<feature type="binding site" evidence="1">
    <location>
        <position position="95"/>
    </location>
    <ligand>
        <name>substrate</name>
    </ligand>
</feature>
<feature type="binding site" evidence="1">
    <location>
        <position position="105"/>
    </location>
    <ligand>
        <name>substrate</name>
    </ligand>
</feature>
<feature type="strand" evidence="3">
    <location>
        <begin position="4"/>
        <end position="6"/>
    </location>
</feature>
<feature type="helix" evidence="3">
    <location>
        <begin position="7"/>
        <end position="14"/>
    </location>
</feature>
<feature type="helix" evidence="3">
    <location>
        <begin position="15"/>
        <end position="17"/>
    </location>
</feature>
<feature type="turn" evidence="3">
    <location>
        <begin position="20"/>
        <end position="22"/>
    </location>
</feature>
<feature type="strand" evidence="3">
    <location>
        <begin position="24"/>
        <end position="41"/>
    </location>
</feature>
<feature type="strand" evidence="3">
    <location>
        <begin position="46"/>
        <end position="48"/>
    </location>
</feature>
<feature type="strand" evidence="3">
    <location>
        <begin position="53"/>
        <end position="60"/>
    </location>
</feature>
<feature type="strand" evidence="3">
    <location>
        <begin position="62"/>
        <end position="68"/>
    </location>
</feature>
<feature type="strand" evidence="3">
    <location>
        <begin position="71"/>
        <end position="77"/>
    </location>
</feature>
<feature type="strand" evidence="3">
    <location>
        <begin position="81"/>
        <end position="85"/>
    </location>
</feature>
<feature type="strand" evidence="3">
    <location>
        <begin position="91"/>
        <end position="95"/>
    </location>
</feature>
<feature type="strand" evidence="3">
    <location>
        <begin position="100"/>
        <end position="106"/>
    </location>
</feature>
<feature type="strand" evidence="3">
    <location>
        <begin position="114"/>
        <end position="120"/>
    </location>
</feature>
<feature type="strand" evidence="3">
    <location>
        <begin position="126"/>
        <end position="132"/>
    </location>
</feature>
<feature type="turn" evidence="3">
    <location>
        <begin position="137"/>
        <end position="139"/>
    </location>
</feature>
<feature type="helix" evidence="3">
    <location>
        <begin position="141"/>
        <end position="149"/>
    </location>
</feature>
<feature type="helix" evidence="3">
    <location>
        <begin position="152"/>
        <end position="156"/>
    </location>
</feature>
<feature type="helix" evidence="3">
    <location>
        <begin position="161"/>
        <end position="163"/>
    </location>
</feature>
<feature type="helix" evidence="3">
    <location>
        <begin position="183"/>
        <end position="188"/>
    </location>
</feature>
<feature type="helix" evidence="3">
    <location>
        <begin position="191"/>
        <end position="196"/>
    </location>
</feature>
<feature type="strand" evidence="3">
    <location>
        <begin position="200"/>
        <end position="203"/>
    </location>
</feature>
<feature type="strand" evidence="3">
    <location>
        <begin position="207"/>
        <end position="214"/>
    </location>
</feature>
<feature type="strand" evidence="3">
    <location>
        <begin position="216"/>
        <end position="223"/>
    </location>
</feature>
<feature type="strand" evidence="3">
    <location>
        <begin position="228"/>
        <end position="235"/>
    </location>
</feature>
<feature type="strand" evidence="3">
    <location>
        <begin position="237"/>
        <end position="243"/>
    </location>
</feature>
<feature type="strand" evidence="3">
    <location>
        <begin position="245"/>
        <end position="248"/>
    </location>
</feature>
<feature type="strand" evidence="3">
    <location>
        <begin position="252"/>
        <end position="256"/>
    </location>
</feature>
<feature type="strand" evidence="3">
    <location>
        <begin position="261"/>
        <end position="266"/>
    </location>
</feature>
<feature type="strand" evidence="3">
    <location>
        <begin position="271"/>
        <end position="277"/>
    </location>
</feature>
<feature type="helix" evidence="3">
    <location>
        <begin position="279"/>
        <end position="281"/>
    </location>
</feature>
<protein>
    <recommendedName>
        <fullName evidence="1">3-hydroxyanthranilate 3,4-dioxygenase</fullName>
        <ecNumber evidence="1">1.13.11.6</ecNumber>
    </recommendedName>
    <alternativeName>
        <fullName evidence="1">3-hydroxyanthranilate oxygenase</fullName>
        <shortName evidence="1">3-HAO</shortName>
    </alternativeName>
    <alternativeName>
        <fullName evidence="1">3-hydroxyanthranilic acid dioxygenase</fullName>
        <shortName evidence="1">HAD</shortName>
    </alternativeName>
</protein>
<keyword id="KW-0002">3D-structure</keyword>
<keyword id="KW-0963">Cytoplasm</keyword>
<keyword id="KW-0223">Dioxygenase</keyword>
<keyword id="KW-0408">Iron</keyword>
<keyword id="KW-0479">Metal-binding</keyword>
<keyword id="KW-0560">Oxidoreductase</keyword>
<keyword id="KW-0662">Pyridine nucleotide biosynthesis</keyword>
<keyword id="KW-1185">Reference proteome</keyword>
<organism>
    <name type="scientific">Bos taurus</name>
    <name type="common">Bovine</name>
    <dbReference type="NCBI Taxonomy" id="9913"/>
    <lineage>
        <taxon>Eukaryota</taxon>
        <taxon>Metazoa</taxon>
        <taxon>Chordata</taxon>
        <taxon>Craniata</taxon>
        <taxon>Vertebrata</taxon>
        <taxon>Euteleostomi</taxon>
        <taxon>Mammalia</taxon>
        <taxon>Eutheria</taxon>
        <taxon>Laurasiatheria</taxon>
        <taxon>Artiodactyla</taxon>
        <taxon>Ruminantia</taxon>
        <taxon>Pecora</taxon>
        <taxon>Bovidae</taxon>
        <taxon>Bovinae</taxon>
        <taxon>Bos</taxon>
    </lineage>
</organism>
<accession>Q0VCA8</accession>
<sequence length="286" mass="32493">MERPVRVKAWVEENRGSFLPPVCNKLLHQKQLKIMFVGGPNTRKDYHIEEGEEVFYQLEGDMLLRVLERGKHRDVVIRQGEIFLLPAGVPHSPQRFANTVGLVIERRRLKTELDGLRYYVGDTTDVLFEKWFYCEDLGTQLAPIIQEFFSSEQYRTGKPNPDQLLKEPPFPLSTRSVMEPMCLEAWLDGHRKELQAGTPLSLFGDTYESQVMVHGQGSSEGLRRDVDVWLWQLEGSSVVTMEGQRLSLTLDDSLLVPAGTLYGWERGQGSVALSVTQDPACKKSLG</sequence>
<dbReference type="EC" id="1.13.11.6" evidence="1"/>
<dbReference type="EMBL" id="BC120265">
    <property type="protein sequence ID" value="AAI20266.1"/>
    <property type="molecule type" value="mRNA"/>
</dbReference>
<dbReference type="RefSeq" id="NP_001068926.1">
    <property type="nucleotide sequence ID" value="NM_001075458.2"/>
</dbReference>
<dbReference type="PDB" id="3FE5">
    <property type="method" value="X-ray"/>
    <property type="resolution" value="2.51 A"/>
    <property type="chains" value="A=2-286"/>
</dbReference>
<dbReference type="PDBsum" id="3FE5"/>
<dbReference type="SMR" id="Q0VCA8"/>
<dbReference type="FunCoup" id="Q0VCA8">
    <property type="interactions" value="230"/>
</dbReference>
<dbReference type="STRING" id="9913.ENSBTAP00000006132"/>
<dbReference type="PaxDb" id="9913-ENSBTAP00000006132"/>
<dbReference type="PeptideAtlas" id="Q0VCA8"/>
<dbReference type="GeneID" id="510602"/>
<dbReference type="KEGG" id="bta:510602"/>
<dbReference type="CTD" id="23498"/>
<dbReference type="eggNOG" id="KOG3995">
    <property type="taxonomic scope" value="Eukaryota"/>
</dbReference>
<dbReference type="HOGENOM" id="CLU_064845_1_0_1"/>
<dbReference type="InParanoid" id="Q0VCA8"/>
<dbReference type="OrthoDB" id="204928at2759"/>
<dbReference type="TreeFam" id="TF300246"/>
<dbReference type="BRENDA" id="1.13.11.6">
    <property type="organism ID" value="908"/>
</dbReference>
<dbReference type="UniPathway" id="UPA00253">
    <property type="reaction ID" value="UER00330"/>
</dbReference>
<dbReference type="EvolutionaryTrace" id="Q0VCA8"/>
<dbReference type="Proteomes" id="UP000009136">
    <property type="component" value="Unplaced"/>
</dbReference>
<dbReference type="GO" id="GO:0005737">
    <property type="term" value="C:cytoplasm"/>
    <property type="evidence" value="ECO:0000318"/>
    <property type="project" value="GO_Central"/>
</dbReference>
<dbReference type="GO" id="GO:0005829">
    <property type="term" value="C:cytosol"/>
    <property type="evidence" value="ECO:0007669"/>
    <property type="project" value="UniProtKB-SubCell"/>
</dbReference>
<dbReference type="GO" id="GO:0000334">
    <property type="term" value="F:3-hydroxyanthranilate 3,4-dioxygenase activity"/>
    <property type="evidence" value="ECO:0000250"/>
    <property type="project" value="UniProtKB"/>
</dbReference>
<dbReference type="GO" id="GO:0008198">
    <property type="term" value="F:ferrous iron binding"/>
    <property type="evidence" value="ECO:0000250"/>
    <property type="project" value="UniProtKB"/>
</dbReference>
<dbReference type="GO" id="GO:0034354">
    <property type="term" value="P:'de novo' NAD biosynthetic process from L-tryptophan"/>
    <property type="evidence" value="ECO:0000318"/>
    <property type="project" value="GO_Central"/>
</dbReference>
<dbReference type="GO" id="GO:0043420">
    <property type="term" value="P:anthranilate metabolic process"/>
    <property type="evidence" value="ECO:0007669"/>
    <property type="project" value="UniProtKB-UniRule"/>
</dbReference>
<dbReference type="GO" id="GO:0006569">
    <property type="term" value="P:L-tryptophan catabolic process"/>
    <property type="evidence" value="ECO:0007669"/>
    <property type="project" value="UniProtKB-UniRule"/>
</dbReference>
<dbReference type="GO" id="GO:0009435">
    <property type="term" value="P:NAD biosynthetic process"/>
    <property type="evidence" value="ECO:0000250"/>
    <property type="project" value="UniProtKB"/>
</dbReference>
<dbReference type="GO" id="GO:0019805">
    <property type="term" value="P:quinolinate biosynthetic process"/>
    <property type="evidence" value="ECO:0000250"/>
    <property type="project" value="UniProtKB"/>
</dbReference>
<dbReference type="GO" id="GO:0046874">
    <property type="term" value="P:quinolinate metabolic process"/>
    <property type="evidence" value="ECO:0000318"/>
    <property type="project" value="GO_Central"/>
</dbReference>
<dbReference type="CDD" id="cd06123">
    <property type="entry name" value="cupin_HAO"/>
    <property type="match status" value="1"/>
</dbReference>
<dbReference type="FunFam" id="2.60.120.10:FF:000077">
    <property type="entry name" value="3-hydroxyanthranilate 3,4-dioxygenase"/>
    <property type="match status" value="1"/>
</dbReference>
<dbReference type="Gene3D" id="2.60.120.10">
    <property type="entry name" value="Jelly Rolls"/>
    <property type="match status" value="1"/>
</dbReference>
<dbReference type="HAMAP" id="MF_00825">
    <property type="entry name" value="3_HAO"/>
    <property type="match status" value="1"/>
</dbReference>
<dbReference type="InterPro" id="IPR010329">
    <property type="entry name" value="3hydroanth_dOase"/>
</dbReference>
<dbReference type="InterPro" id="IPR016700">
    <property type="entry name" value="3hydroanth_dOase_met"/>
</dbReference>
<dbReference type="InterPro" id="IPR014710">
    <property type="entry name" value="RmlC-like_jellyroll"/>
</dbReference>
<dbReference type="InterPro" id="IPR011051">
    <property type="entry name" value="RmlC_Cupin_sf"/>
</dbReference>
<dbReference type="NCBIfam" id="TIGR03037">
    <property type="entry name" value="anthran_nbaC"/>
    <property type="match status" value="1"/>
</dbReference>
<dbReference type="PANTHER" id="PTHR15497">
    <property type="entry name" value="3-HYDROXYANTHRANILATE 3,4-DIOXYGENASE"/>
    <property type="match status" value="1"/>
</dbReference>
<dbReference type="PANTHER" id="PTHR15497:SF1">
    <property type="entry name" value="3-HYDROXYANTHRANILATE 3,4-DIOXYGENASE"/>
    <property type="match status" value="1"/>
</dbReference>
<dbReference type="Pfam" id="PF06052">
    <property type="entry name" value="3-HAO"/>
    <property type="match status" value="1"/>
</dbReference>
<dbReference type="PIRSF" id="PIRSF017681">
    <property type="entry name" value="3hydroanth_dOase_animal"/>
    <property type="match status" value="1"/>
</dbReference>
<dbReference type="SUPFAM" id="SSF51182">
    <property type="entry name" value="RmlC-like cupins"/>
    <property type="match status" value="2"/>
</dbReference>
<comment type="function">
    <text evidence="1">Catalyzes the oxidative ring opening of 3-hydroxyanthranilate to 2-amino-3-carboxymuconate semialdehyde, which spontaneously cyclizes to quinolinate.</text>
</comment>
<comment type="catalytic activity">
    <reaction evidence="1">
        <text>3-hydroxyanthranilate + O2 = (2Z,4Z)-2-amino-3-carboxymuconate 6-semialdehyde</text>
        <dbReference type="Rhea" id="RHEA:17953"/>
        <dbReference type="ChEBI" id="CHEBI:15379"/>
        <dbReference type="ChEBI" id="CHEBI:36559"/>
        <dbReference type="ChEBI" id="CHEBI:77612"/>
        <dbReference type="EC" id="1.13.11.6"/>
    </reaction>
</comment>
<comment type="cofactor">
    <cofactor>
        <name>Fe(2+)</name>
        <dbReference type="ChEBI" id="CHEBI:29033"/>
    </cofactor>
</comment>
<comment type="pathway">
    <text evidence="1">Cofactor biosynthesis; NAD(+) biosynthesis; quinolinate from L-kynurenine: step 3/3.</text>
</comment>
<comment type="subunit">
    <text evidence="1 2">Monomer.</text>
</comment>
<comment type="subcellular location">
    <subcellularLocation>
        <location evidence="1">Cytoplasm</location>
        <location evidence="1">Cytosol</location>
    </subcellularLocation>
</comment>
<comment type="similarity">
    <text evidence="1">Belongs to the 3-HAO family.</text>
</comment>